<sequence>MGAVSRDDYIALCTELVEHDRRYYALNQPTISDYSYDMKMRELQEIEVQHPEWKVSWSPTMYLGDRPSGQFPVVPHSSPMLSIANVYSLQELEEFFSRTEKLLGYSPGYSLELKIDGIAVAIRYEKRLFAQALSRGNGVKGEDITANVSTIRSLPMRLPQEAPEDLEVRGEVFLSYEAFEELNACQREQGKLEFANPRNAAGGTLKLLSSKEAAKRKLDLSVYGLITDQKKRSHFENLQLCSQWGFFVAGMPKQCRSRQEVVERIREIEEMRAALPMAIDGVVIKVDNIAHQDRLGLTSKHYRWAIAYKYAPERAETILEDIVVQVGKTGILTPVAELAPVFLSGSRVSRASLYNQDEIEKKDIRIGDSVYVEKGGEVIPKIVGINLAKRSLESEPWKMPSLCPVCHEPVVKEKVSVRCINPLCSGGMLEKICFFASKSALNIDHLGEKVVTKLFEVGLISSCSDIFALTEEDLKQVPGFKDRSIQNLLASIAGAKKVALDRLLTALSIPFVGSSGAIALADHFGTLDKVIEASLDELMSIEGIGPKVAASIVAFFSKHENREEIRRMQELGVQVLSKQSDKEAPLQGKVFVLTGTLQQMTRTQAEERIRSLGGKVSSSVSKSTYAVIAGSEAGGKLKKAQDLGLSIWNESKLSRILDAKSVS</sequence>
<proteinExistence type="inferred from homology"/>
<evidence type="ECO:0000255" key="1">
    <source>
        <dbReference type="HAMAP-Rule" id="MF_01588"/>
    </source>
</evidence>
<feature type="chain" id="PRO_0000380336" description="DNA ligase">
    <location>
        <begin position="1"/>
        <end position="663"/>
    </location>
</feature>
<feature type="domain" description="BRCT" evidence="1">
    <location>
        <begin position="581"/>
        <end position="663"/>
    </location>
</feature>
<feature type="active site" description="N6-AMP-lysine intermediate" evidence="1">
    <location>
        <position position="114"/>
    </location>
</feature>
<feature type="binding site" evidence="1">
    <location>
        <begin position="33"/>
        <end position="37"/>
    </location>
    <ligand>
        <name>NAD(+)</name>
        <dbReference type="ChEBI" id="CHEBI:57540"/>
    </ligand>
</feature>
<feature type="binding site" evidence="1">
    <location>
        <begin position="82"/>
        <end position="83"/>
    </location>
    <ligand>
        <name>NAD(+)</name>
        <dbReference type="ChEBI" id="CHEBI:57540"/>
    </ligand>
</feature>
<feature type="binding site" evidence="1">
    <location>
        <position position="112"/>
    </location>
    <ligand>
        <name>NAD(+)</name>
        <dbReference type="ChEBI" id="CHEBI:57540"/>
    </ligand>
</feature>
<feature type="binding site" evidence="1">
    <location>
        <position position="135"/>
    </location>
    <ligand>
        <name>NAD(+)</name>
        <dbReference type="ChEBI" id="CHEBI:57540"/>
    </ligand>
</feature>
<feature type="binding site" evidence="1">
    <location>
        <position position="171"/>
    </location>
    <ligand>
        <name>NAD(+)</name>
        <dbReference type="ChEBI" id="CHEBI:57540"/>
    </ligand>
</feature>
<feature type="binding site" evidence="1">
    <location>
        <position position="285"/>
    </location>
    <ligand>
        <name>NAD(+)</name>
        <dbReference type="ChEBI" id="CHEBI:57540"/>
    </ligand>
</feature>
<feature type="binding site" evidence="1">
    <location>
        <position position="309"/>
    </location>
    <ligand>
        <name>NAD(+)</name>
        <dbReference type="ChEBI" id="CHEBI:57540"/>
    </ligand>
</feature>
<feature type="binding site" evidence="1">
    <location>
        <position position="403"/>
    </location>
    <ligand>
        <name>Zn(2+)</name>
        <dbReference type="ChEBI" id="CHEBI:29105"/>
    </ligand>
</feature>
<feature type="binding site" evidence="1">
    <location>
        <position position="406"/>
    </location>
    <ligand>
        <name>Zn(2+)</name>
        <dbReference type="ChEBI" id="CHEBI:29105"/>
    </ligand>
</feature>
<feature type="binding site" evidence="1">
    <location>
        <position position="419"/>
    </location>
    <ligand>
        <name>Zn(2+)</name>
        <dbReference type="ChEBI" id="CHEBI:29105"/>
    </ligand>
</feature>
<feature type="binding site" evidence="1">
    <location>
        <position position="424"/>
    </location>
    <ligand>
        <name>Zn(2+)</name>
        <dbReference type="ChEBI" id="CHEBI:29105"/>
    </ligand>
</feature>
<name>DNLJ_CHLT2</name>
<reference key="1">
    <citation type="journal article" date="2008" name="Genome Res.">
        <title>Chlamydia trachomatis: genome sequence analysis of lymphogranuloma venereum isolates.</title>
        <authorList>
            <person name="Thomson N.R."/>
            <person name="Holden M.T.G."/>
            <person name="Carder C."/>
            <person name="Lennard N."/>
            <person name="Lockey S.J."/>
            <person name="Marsh P."/>
            <person name="Skipp P."/>
            <person name="O'Connor C.D."/>
            <person name="Goodhead I."/>
            <person name="Norbertzcak H."/>
            <person name="Harris B."/>
            <person name="Ormond D."/>
            <person name="Rance R."/>
            <person name="Quail M.A."/>
            <person name="Parkhill J."/>
            <person name="Stephens R.S."/>
            <person name="Clarke I.N."/>
        </authorList>
    </citation>
    <scope>NUCLEOTIDE SEQUENCE [LARGE SCALE GENOMIC DNA]</scope>
    <source>
        <strain>ATCC VR-902B / DSM 19102 / 434/Bu</strain>
    </source>
</reference>
<gene>
    <name evidence="1" type="primary">ligA</name>
    <name type="ordered locus">CTL0401</name>
</gene>
<keyword id="KW-0227">DNA damage</keyword>
<keyword id="KW-0234">DNA repair</keyword>
<keyword id="KW-0235">DNA replication</keyword>
<keyword id="KW-0436">Ligase</keyword>
<keyword id="KW-0460">Magnesium</keyword>
<keyword id="KW-0464">Manganese</keyword>
<keyword id="KW-0479">Metal-binding</keyword>
<keyword id="KW-0520">NAD</keyword>
<keyword id="KW-0862">Zinc</keyword>
<dbReference type="EC" id="6.5.1.2" evidence="1"/>
<dbReference type="EMBL" id="AM884176">
    <property type="protein sequence ID" value="CAP03841.1"/>
    <property type="molecule type" value="Genomic_DNA"/>
</dbReference>
<dbReference type="RefSeq" id="WP_009873594.1">
    <property type="nucleotide sequence ID" value="NC_010287.1"/>
</dbReference>
<dbReference type="RefSeq" id="YP_001654485.1">
    <property type="nucleotide sequence ID" value="NC_010287.1"/>
</dbReference>
<dbReference type="SMR" id="B0B9Q4"/>
<dbReference type="KEGG" id="ctb:CTL0401"/>
<dbReference type="PATRIC" id="fig|471472.4.peg.432"/>
<dbReference type="HOGENOM" id="CLU_007764_2_1_0"/>
<dbReference type="Proteomes" id="UP001154402">
    <property type="component" value="Chromosome"/>
</dbReference>
<dbReference type="GO" id="GO:0005829">
    <property type="term" value="C:cytosol"/>
    <property type="evidence" value="ECO:0007669"/>
    <property type="project" value="TreeGrafter"/>
</dbReference>
<dbReference type="GO" id="GO:0003677">
    <property type="term" value="F:DNA binding"/>
    <property type="evidence" value="ECO:0007669"/>
    <property type="project" value="InterPro"/>
</dbReference>
<dbReference type="GO" id="GO:0003911">
    <property type="term" value="F:DNA ligase (NAD+) activity"/>
    <property type="evidence" value="ECO:0007669"/>
    <property type="project" value="UniProtKB-UniRule"/>
</dbReference>
<dbReference type="GO" id="GO:0046872">
    <property type="term" value="F:metal ion binding"/>
    <property type="evidence" value="ECO:0007669"/>
    <property type="project" value="UniProtKB-KW"/>
</dbReference>
<dbReference type="GO" id="GO:0006281">
    <property type="term" value="P:DNA repair"/>
    <property type="evidence" value="ECO:0007669"/>
    <property type="project" value="UniProtKB-KW"/>
</dbReference>
<dbReference type="GO" id="GO:0006260">
    <property type="term" value="P:DNA replication"/>
    <property type="evidence" value="ECO:0007669"/>
    <property type="project" value="UniProtKB-KW"/>
</dbReference>
<dbReference type="CDD" id="cd17748">
    <property type="entry name" value="BRCT_DNA_ligase_like"/>
    <property type="match status" value="1"/>
</dbReference>
<dbReference type="CDD" id="cd00114">
    <property type="entry name" value="LIGANc"/>
    <property type="match status" value="1"/>
</dbReference>
<dbReference type="FunFam" id="1.10.150.20:FF:000006">
    <property type="entry name" value="DNA ligase"/>
    <property type="match status" value="1"/>
</dbReference>
<dbReference type="FunFam" id="2.40.50.140:FF:000012">
    <property type="entry name" value="DNA ligase"/>
    <property type="match status" value="1"/>
</dbReference>
<dbReference type="FunFam" id="3.30.470.30:FF:000041">
    <property type="entry name" value="DNA ligase"/>
    <property type="match status" value="1"/>
</dbReference>
<dbReference type="Gene3D" id="6.20.10.30">
    <property type="match status" value="1"/>
</dbReference>
<dbReference type="Gene3D" id="1.10.150.20">
    <property type="entry name" value="5' to 3' exonuclease, C-terminal subdomain"/>
    <property type="match status" value="2"/>
</dbReference>
<dbReference type="Gene3D" id="3.40.50.10190">
    <property type="entry name" value="BRCT domain"/>
    <property type="match status" value="1"/>
</dbReference>
<dbReference type="Gene3D" id="3.30.470.30">
    <property type="entry name" value="DNA ligase/mRNA capping enzyme"/>
    <property type="match status" value="1"/>
</dbReference>
<dbReference type="Gene3D" id="1.10.287.610">
    <property type="entry name" value="Helix hairpin bin"/>
    <property type="match status" value="1"/>
</dbReference>
<dbReference type="Gene3D" id="2.40.50.140">
    <property type="entry name" value="Nucleic acid-binding proteins"/>
    <property type="match status" value="1"/>
</dbReference>
<dbReference type="HAMAP" id="MF_01588">
    <property type="entry name" value="DNA_ligase_A"/>
    <property type="match status" value="1"/>
</dbReference>
<dbReference type="InterPro" id="IPR001357">
    <property type="entry name" value="BRCT_dom"/>
</dbReference>
<dbReference type="InterPro" id="IPR036420">
    <property type="entry name" value="BRCT_dom_sf"/>
</dbReference>
<dbReference type="InterPro" id="IPR041663">
    <property type="entry name" value="DisA/LigA_HHH"/>
</dbReference>
<dbReference type="InterPro" id="IPR001679">
    <property type="entry name" value="DNA_ligase"/>
</dbReference>
<dbReference type="InterPro" id="IPR018239">
    <property type="entry name" value="DNA_ligase_AS"/>
</dbReference>
<dbReference type="InterPro" id="IPR033136">
    <property type="entry name" value="DNA_ligase_CS"/>
</dbReference>
<dbReference type="InterPro" id="IPR013839">
    <property type="entry name" value="DNAligase_adenylation"/>
</dbReference>
<dbReference type="InterPro" id="IPR013840">
    <property type="entry name" value="DNAligase_N"/>
</dbReference>
<dbReference type="InterPro" id="IPR003583">
    <property type="entry name" value="Hlx-hairpin-Hlx_DNA-bd_motif"/>
</dbReference>
<dbReference type="InterPro" id="IPR012340">
    <property type="entry name" value="NA-bd_OB-fold"/>
</dbReference>
<dbReference type="InterPro" id="IPR004150">
    <property type="entry name" value="NAD_DNA_ligase_OB"/>
</dbReference>
<dbReference type="InterPro" id="IPR010994">
    <property type="entry name" value="RuvA_2-like"/>
</dbReference>
<dbReference type="NCBIfam" id="TIGR00575">
    <property type="entry name" value="dnlj"/>
    <property type="match status" value="1"/>
</dbReference>
<dbReference type="NCBIfam" id="NF005932">
    <property type="entry name" value="PRK07956.1"/>
    <property type="match status" value="1"/>
</dbReference>
<dbReference type="PANTHER" id="PTHR23389">
    <property type="entry name" value="CHROMOSOME TRANSMISSION FIDELITY FACTOR 18"/>
    <property type="match status" value="1"/>
</dbReference>
<dbReference type="PANTHER" id="PTHR23389:SF9">
    <property type="entry name" value="DNA LIGASE"/>
    <property type="match status" value="1"/>
</dbReference>
<dbReference type="Pfam" id="PF00533">
    <property type="entry name" value="BRCT"/>
    <property type="match status" value="1"/>
</dbReference>
<dbReference type="Pfam" id="PF01653">
    <property type="entry name" value="DNA_ligase_aden"/>
    <property type="match status" value="1"/>
</dbReference>
<dbReference type="Pfam" id="PF03120">
    <property type="entry name" value="DNA_ligase_OB"/>
    <property type="match status" value="1"/>
</dbReference>
<dbReference type="Pfam" id="PF12826">
    <property type="entry name" value="HHH_2"/>
    <property type="match status" value="1"/>
</dbReference>
<dbReference type="Pfam" id="PF14520">
    <property type="entry name" value="HHH_5"/>
    <property type="match status" value="1"/>
</dbReference>
<dbReference type="PIRSF" id="PIRSF001604">
    <property type="entry name" value="LigA"/>
    <property type="match status" value="1"/>
</dbReference>
<dbReference type="SMART" id="SM00292">
    <property type="entry name" value="BRCT"/>
    <property type="match status" value="1"/>
</dbReference>
<dbReference type="SMART" id="SM00278">
    <property type="entry name" value="HhH1"/>
    <property type="match status" value="3"/>
</dbReference>
<dbReference type="SMART" id="SM00532">
    <property type="entry name" value="LIGANc"/>
    <property type="match status" value="1"/>
</dbReference>
<dbReference type="SUPFAM" id="SSF52113">
    <property type="entry name" value="BRCT domain"/>
    <property type="match status" value="1"/>
</dbReference>
<dbReference type="SUPFAM" id="SSF56091">
    <property type="entry name" value="DNA ligase/mRNA capping enzyme, catalytic domain"/>
    <property type="match status" value="1"/>
</dbReference>
<dbReference type="SUPFAM" id="SSF50249">
    <property type="entry name" value="Nucleic acid-binding proteins"/>
    <property type="match status" value="1"/>
</dbReference>
<dbReference type="SUPFAM" id="SSF47781">
    <property type="entry name" value="RuvA domain 2-like"/>
    <property type="match status" value="1"/>
</dbReference>
<dbReference type="PROSITE" id="PS50172">
    <property type="entry name" value="BRCT"/>
    <property type="match status" value="1"/>
</dbReference>
<dbReference type="PROSITE" id="PS01055">
    <property type="entry name" value="DNA_LIGASE_N1"/>
    <property type="match status" value="1"/>
</dbReference>
<dbReference type="PROSITE" id="PS01056">
    <property type="entry name" value="DNA_LIGASE_N2"/>
    <property type="match status" value="1"/>
</dbReference>
<comment type="function">
    <text evidence="1">DNA ligase that catalyzes the formation of phosphodiester linkages between 5'-phosphoryl and 3'-hydroxyl groups in double-stranded DNA using NAD as a coenzyme and as the energy source for the reaction. It is essential for DNA replication and repair of damaged DNA.</text>
</comment>
<comment type="catalytic activity">
    <reaction evidence="1">
        <text>NAD(+) + (deoxyribonucleotide)n-3'-hydroxyl + 5'-phospho-(deoxyribonucleotide)m = (deoxyribonucleotide)n+m + AMP + beta-nicotinamide D-nucleotide.</text>
        <dbReference type="EC" id="6.5.1.2"/>
    </reaction>
</comment>
<comment type="cofactor">
    <cofactor evidence="1">
        <name>Mg(2+)</name>
        <dbReference type="ChEBI" id="CHEBI:18420"/>
    </cofactor>
    <cofactor evidence="1">
        <name>Mn(2+)</name>
        <dbReference type="ChEBI" id="CHEBI:29035"/>
    </cofactor>
</comment>
<comment type="similarity">
    <text evidence="1">Belongs to the NAD-dependent DNA ligase family. LigA subfamily.</text>
</comment>
<accession>B0B9Q4</accession>
<organism>
    <name type="scientific">Chlamydia trachomatis serovar L2 (strain ATCC VR-902B / DSM 19102 / 434/Bu)</name>
    <dbReference type="NCBI Taxonomy" id="471472"/>
    <lineage>
        <taxon>Bacteria</taxon>
        <taxon>Pseudomonadati</taxon>
        <taxon>Chlamydiota</taxon>
        <taxon>Chlamydiia</taxon>
        <taxon>Chlamydiales</taxon>
        <taxon>Chlamydiaceae</taxon>
        <taxon>Chlamydia/Chlamydophila group</taxon>
        <taxon>Chlamydia</taxon>
    </lineage>
</organism>
<protein>
    <recommendedName>
        <fullName evidence="1">DNA ligase</fullName>
        <ecNumber evidence="1">6.5.1.2</ecNumber>
    </recommendedName>
    <alternativeName>
        <fullName evidence="1">Polydeoxyribonucleotide synthase [NAD(+)]</fullName>
    </alternativeName>
</protein>